<organism>
    <name type="scientific">Lucihormetica verrucosa</name>
    <name type="common">Cockroach</name>
    <dbReference type="NCBI Taxonomy" id="521514"/>
    <lineage>
        <taxon>Eukaryota</taxon>
        <taxon>Metazoa</taxon>
        <taxon>Ecdysozoa</taxon>
        <taxon>Arthropoda</taxon>
        <taxon>Hexapoda</taxon>
        <taxon>Insecta</taxon>
        <taxon>Pterygota</taxon>
        <taxon>Neoptera</taxon>
        <taxon>Polyneoptera</taxon>
        <taxon>Dictyoptera</taxon>
        <taxon>Blattodea</taxon>
        <taxon>Blaberoidea</taxon>
        <taxon>Blaberidae</taxon>
        <taxon>Blaberinae</taxon>
        <taxon>Lucihormetica</taxon>
    </lineage>
</organism>
<accession>P85677</accession>
<keyword id="KW-0027">Amidation</keyword>
<keyword id="KW-0903">Direct protein sequencing</keyword>
<keyword id="KW-0372">Hormone</keyword>
<keyword id="KW-0527">Neuropeptide</keyword>
<keyword id="KW-0964">Secreted</keyword>
<keyword id="KW-0765">Sulfation</keyword>
<reference evidence="5" key="1">
    <citation type="journal article" date="2009" name="BMC Evol. Biol.">
        <title>A proteomic approach for studying insect phylogeny: CAPA peptides of ancient insect taxa (Dictyoptera, Blattoptera) as a test case.</title>
        <authorList>
            <person name="Roth S."/>
            <person name="Fromm B."/>
            <person name="Gaede G."/>
            <person name="Predel R."/>
        </authorList>
    </citation>
    <scope>PROTEIN SEQUENCE</scope>
    <scope>AMIDATION AT PHE-11</scope>
    <source>
        <tissue evidence="3">Corpora cardiaca</tissue>
    </source>
</reference>
<comment type="function">
    <text evidence="1">Myotropic peptide.</text>
</comment>
<comment type="subcellular location">
    <subcellularLocation>
        <location evidence="5">Secreted</location>
    </subcellularLocation>
</comment>
<comment type="similarity">
    <text evidence="2">Belongs to the gastrin/cholecystokinin family.</text>
</comment>
<evidence type="ECO:0000250" key="1">
    <source>
        <dbReference type="UniProtKB" id="P41493"/>
    </source>
</evidence>
<evidence type="ECO:0000255" key="2"/>
<evidence type="ECO:0000269" key="3">
    <source>
    </source>
</evidence>
<evidence type="ECO:0000303" key="4">
    <source>
    </source>
</evidence>
<evidence type="ECO:0000305" key="5"/>
<sequence>EQFEDYGHMRF</sequence>
<proteinExistence type="evidence at protein level"/>
<feature type="peptide" id="PRO_0000378884" description="Sulfakinin-1" evidence="3">
    <location>
        <begin position="1"/>
        <end position="11"/>
    </location>
</feature>
<feature type="modified residue" description="Sulfotyrosine" evidence="1">
    <location>
        <position position="6"/>
    </location>
</feature>
<feature type="modified residue" description="Phenylalanine amide" evidence="3">
    <location>
        <position position="11"/>
    </location>
</feature>
<protein>
    <recommendedName>
        <fullName evidence="4">Sulfakinin-1</fullName>
        <shortName evidence="4">LucVe-SK-1</shortName>
    </recommendedName>
</protein>
<dbReference type="GO" id="GO:0005576">
    <property type="term" value="C:extracellular region"/>
    <property type="evidence" value="ECO:0007669"/>
    <property type="project" value="UniProtKB-SubCell"/>
</dbReference>
<dbReference type="GO" id="GO:0005179">
    <property type="term" value="F:hormone activity"/>
    <property type="evidence" value="ECO:0007669"/>
    <property type="project" value="UniProtKB-KW"/>
</dbReference>
<dbReference type="GO" id="GO:0007218">
    <property type="term" value="P:neuropeptide signaling pathway"/>
    <property type="evidence" value="ECO:0007669"/>
    <property type="project" value="UniProtKB-KW"/>
</dbReference>
<dbReference type="InterPro" id="IPR013152">
    <property type="entry name" value="Gastrin/cholecystokinin_CS"/>
</dbReference>
<dbReference type="InterPro" id="IPR013259">
    <property type="entry name" value="Sulfakinin"/>
</dbReference>
<dbReference type="Pfam" id="PF08257">
    <property type="entry name" value="Sulfakinin"/>
    <property type="match status" value="1"/>
</dbReference>
<dbReference type="PROSITE" id="PS00259">
    <property type="entry name" value="GASTRIN"/>
    <property type="match status" value="1"/>
</dbReference>
<name>SK1_LUCVE</name>